<keyword id="KW-0687">Ribonucleoprotein</keyword>
<keyword id="KW-0689">Ribosomal protein</keyword>
<keyword id="KW-0694">RNA-binding</keyword>
<keyword id="KW-0699">rRNA-binding</keyword>
<sequence length="187" mass="20524">MSRIGKRPITVPKGVQVTIGEQNLVTVKGPKGTLSQQLHPEMIIRQEGDVITVQRPSDGKLHRALHGLTRTLIHNMVVGVTQGWQRALEINGVGYRAQLEGKTLVLNLGFSHPVRIEPPPNISYIVGERKSANDPLALTVVGIDKQQVGEEAARIRSLRPPEPYKGKGIKYAEEKIRRKAGKAGKAK</sequence>
<accession>B9LJE7</accession>
<reference key="1">
    <citation type="submission" date="2009-01" db="EMBL/GenBank/DDBJ databases">
        <title>Complete sequence of Chloroflexus sp. Y-400-fl.</title>
        <authorList>
            <consortium name="US DOE Joint Genome Institute"/>
            <person name="Lucas S."/>
            <person name="Copeland A."/>
            <person name="Lapidus A."/>
            <person name="Glavina del Rio T."/>
            <person name="Dalin E."/>
            <person name="Tice H."/>
            <person name="Bruce D."/>
            <person name="Goodwin L."/>
            <person name="Pitluck S."/>
            <person name="Sims D."/>
            <person name="Kiss H."/>
            <person name="Brettin T."/>
            <person name="Detter J.C."/>
            <person name="Han C."/>
            <person name="Larimer F."/>
            <person name="Land M."/>
            <person name="Hauser L."/>
            <person name="Kyrpides N."/>
            <person name="Ovchinnikova G."/>
            <person name="Bryant D.A."/>
            <person name="Richardson P."/>
        </authorList>
    </citation>
    <scope>NUCLEOTIDE SEQUENCE [LARGE SCALE GENOMIC DNA]</scope>
    <source>
        <strain>ATCC 29364 / DSM 637 / Y-400-fl</strain>
    </source>
</reference>
<proteinExistence type="inferred from homology"/>
<gene>
    <name evidence="1" type="primary">rplF</name>
    <name type="ordered locus">Chy400_2571</name>
</gene>
<dbReference type="EMBL" id="CP001364">
    <property type="protein sequence ID" value="ACM53963.1"/>
    <property type="molecule type" value="Genomic_DNA"/>
</dbReference>
<dbReference type="SMR" id="B9LJE7"/>
<dbReference type="KEGG" id="chl:Chy400_2571"/>
<dbReference type="HOGENOM" id="CLU_065464_1_2_0"/>
<dbReference type="OrthoDB" id="9805007at2"/>
<dbReference type="GO" id="GO:0022625">
    <property type="term" value="C:cytosolic large ribosomal subunit"/>
    <property type="evidence" value="ECO:0007669"/>
    <property type="project" value="TreeGrafter"/>
</dbReference>
<dbReference type="GO" id="GO:0019843">
    <property type="term" value="F:rRNA binding"/>
    <property type="evidence" value="ECO:0007669"/>
    <property type="project" value="UniProtKB-UniRule"/>
</dbReference>
<dbReference type="GO" id="GO:0003735">
    <property type="term" value="F:structural constituent of ribosome"/>
    <property type="evidence" value="ECO:0007669"/>
    <property type="project" value="InterPro"/>
</dbReference>
<dbReference type="GO" id="GO:0002181">
    <property type="term" value="P:cytoplasmic translation"/>
    <property type="evidence" value="ECO:0007669"/>
    <property type="project" value="TreeGrafter"/>
</dbReference>
<dbReference type="FunFam" id="3.90.930.12:FF:000001">
    <property type="entry name" value="50S ribosomal protein L6"/>
    <property type="match status" value="1"/>
</dbReference>
<dbReference type="FunFam" id="3.90.930.12:FF:000002">
    <property type="entry name" value="50S ribosomal protein L6"/>
    <property type="match status" value="1"/>
</dbReference>
<dbReference type="Gene3D" id="3.90.930.12">
    <property type="entry name" value="Ribosomal protein L6, alpha-beta domain"/>
    <property type="match status" value="2"/>
</dbReference>
<dbReference type="HAMAP" id="MF_01365_B">
    <property type="entry name" value="Ribosomal_uL6_B"/>
    <property type="match status" value="1"/>
</dbReference>
<dbReference type="InterPro" id="IPR000702">
    <property type="entry name" value="Ribosomal_uL6-like"/>
</dbReference>
<dbReference type="InterPro" id="IPR036789">
    <property type="entry name" value="Ribosomal_uL6-like_a/b-dom_sf"/>
</dbReference>
<dbReference type="InterPro" id="IPR020040">
    <property type="entry name" value="Ribosomal_uL6_a/b-dom"/>
</dbReference>
<dbReference type="InterPro" id="IPR019906">
    <property type="entry name" value="Ribosomal_uL6_bac-type"/>
</dbReference>
<dbReference type="InterPro" id="IPR002358">
    <property type="entry name" value="Ribosomal_uL6_CS"/>
</dbReference>
<dbReference type="NCBIfam" id="TIGR03654">
    <property type="entry name" value="L6_bact"/>
    <property type="match status" value="1"/>
</dbReference>
<dbReference type="PANTHER" id="PTHR11655">
    <property type="entry name" value="60S/50S RIBOSOMAL PROTEIN L6/L9"/>
    <property type="match status" value="1"/>
</dbReference>
<dbReference type="PANTHER" id="PTHR11655:SF14">
    <property type="entry name" value="LARGE RIBOSOMAL SUBUNIT PROTEIN UL6M"/>
    <property type="match status" value="1"/>
</dbReference>
<dbReference type="Pfam" id="PF00347">
    <property type="entry name" value="Ribosomal_L6"/>
    <property type="match status" value="2"/>
</dbReference>
<dbReference type="PIRSF" id="PIRSF002162">
    <property type="entry name" value="Ribosomal_L6"/>
    <property type="match status" value="1"/>
</dbReference>
<dbReference type="PRINTS" id="PR00059">
    <property type="entry name" value="RIBOSOMALL6"/>
</dbReference>
<dbReference type="SUPFAM" id="SSF56053">
    <property type="entry name" value="Ribosomal protein L6"/>
    <property type="match status" value="2"/>
</dbReference>
<dbReference type="PROSITE" id="PS00525">
    <property type="entry name" value="RIBOSOMAL_L6_1"/>
    <property type="match status" value="1"/>
</dbReference>
<name>RL6_CHLSY</name>
<feature type="chain" id="PRO_1000166798" description="Large ribosomal subunit protein uL6">
    <location>
        <begin position="1"/>
        <end position="187"/>
    </location>
</feature>
<feature type="region of interest" description="Disordered" evidence="2">
    <location>
        <begin position="151"/>
        <end position="170"/>
    </location>
</feature>
<comment type="function">
    <text evidence="1">This protein binds to the 23S rRNA, and is important in its secondary structure. It is located near the subunit interface in the base of the L7/L12 stalk, and near the tRNA binding site of the peptidyltransferase center.</text>
</comment>
<comment type="subunit">
    <text evidence="1">Part of the 50S ribosomal subunit.</text>
</comment>
<comment type="similarity">
    <text evidence="1">Belongs to the universal ribosomal protein uL6 family.</text>
</comment>
<organism>
    <name type="scientific">Chloroflexus aurantiacus (strain ATCC 29364 / DSM 637 / Y-400-fl)</name>
    <dbReference type="NCBI Taxonomy" id="480224"/>
    <lineage>
        <taxon>Bacteria</taxon>
        <taxon>Bacillati</taxon>
        <taxon>Chloroflexota</taxon>
        <taxon>Chloroflexia</taxon>
        <taxon>Chloroflexales</taxon>
        <taxon>Chloroflexineae</taxon>
        <taxon>Chloroflexaceae</taxon>
        <taxon>Chloroflexus</taxon>
    </lineage>
</organism>
<evidence type="ECO:0000255" key="1">
    <source>
        <dbReference type="HAMAP-Rule" id="MF_01365"/>
    </source>
</evidence>
<evidence type="ECO:0000256" key="2">
    <source>
        <dbReference type="SAM" id="MobiDB-lite"/>
    </source>
</evidence>
<evidence type="ECO:0000305" key="3"/>
<protein>
    <recommendedName>
        <fullName evidence="1">Large ribosomal subunit protein uL6</fullName>
    </recommendedName>
    <alternativeName>
        <fullName evidence="3">50S ribosomal protein L6</fullName>
    </alternativeName>
</protein>